<organism>
    <name type="scientific">Lophophora williamsii</name>
    <name type="common">Peyote</name>
    <name type="synonym">Echinocactus williamsii</name>
    <dbReference type="NCBI Taxonomy" id="130138"/>
    <lineage>
        <taxon>Eukaryota</taxon>
        <taxon>Viridiplantae</taxon>
        <taxon>Streptophyta</taxon>
        <taxon>Embryophyta</taxon>
        <taxon>Tracheophyta</taxon>
        <taxon>Spermatophyta</taxon>
        <taxon>Magnoliopsida</taxon>
        <taxon>eudicotyledons</taxon>
        <taxon>Gunneridae</taxon>
        <taxon>Pentapetalae</taxon>
        <taxon>Caryophyllales</taxon>
        <taxon>Cactineae</taxon>
        <taxon>Cactaceae</taxon>
        <taxon>Cactoideae</taxon>
        <taxon>Cacteae</taxon>
        <taxon>Lophophora</taxon>
    </lineage>
</organism>
<reference evidence="7" key="1">
    <citation type="journal article" date="2023" name="Plant J.">
        <title>Elucidation of the mescaline biosynthetic pathway in peyote (Lophophora williamsii).</title>
        <authorList>
            <person name="Watkins J.L."/>
            <person name="Li Q."/>
            <person name="Yeaman S."/>
            <person name="Facchini P.J."/>
        </authorList>
    </citation>
    <scope>NUCLEOTIDE SEQUENCE [MRNA]</scope>
    <scope>FUNCTION</scope>
    <scope>CATALYTIC ACTIVITY</scope>
    <scope>PATHWAY</scope>
    <scope>TISSUE SPECIFICITY</scope>
    <source>
        <strain>cv. Jourdaniana</strain>
    </source>
</reference>
<reference key="2">
    <citation type="journal article" date="2024" name="Mol. Plant">
        <title>The biosynthetic pathway of the hallucinogen mescaline and its heterologous reconstruction.</title>
        <authorList>
            <person name="Berman P."/>
            <person name="de Haro L.A."/>
            <person name="Cavaco A.-R."/>
            <person name="Panda S."/>
            <person name="Dong Y."/>
            <person name="Kuzmich N."/>
            <person name="Lichtenstein G."/>
            <person name="Peleg Y."/>
            <person name="Harat H."/>
            <person name="Jozwiak A."/>
            <person name="Cai J."/>
            <person name="Heinig U."/>
            <person name="Meir S."/>
            <person name="Rogachev I."/>
            <person name="Aharoni A."/>
        </authorList>
    </citation>
    <scope>NUCLEOTIDE SEQUENCE [MRNA]</scope>
    <scope>FUNCTION</scope>
    <scope>CATALYTIC ACTIVITY</scope>
    <scope>PATHWAY</scope>
    <scope>BIOTECHNOLOGY</scope>
    <scope>BIOPHYSICOCHEMICAL PROPERTIES</scope>
    <scope>TISSUE SPECIFICITY</scope>
    <source>
        <strain>cv. Rehovot 7</strain>
    </source>
</reference>
<sequence length="522" mass="58643">MGSLDIKQESSPLMTNPLDSEEFRRQGYMVIDFLAEYYKNIQKFPVRSQVEPGYLRKRLPESAPYEPESIETILKDVHDDIVPGLTHWQSPNYYAYFPSSGSTAGLLGETLAAGFNVVGFNWISSPASTELESIVMDWLAEMLNLPKSFTFSGDGGGVMMGTTCEAILTTITAARDRILDRIGREHINKLVVYGSDQTHCSFFKSAKIAGISPNNFRQVKTSRVNAFSMRPDALRAAIQADVDAGLVPFFLCTTVGTTSTAAVDPVALLCEVAKDYGMWVHIDAAYAGNACICPEFRHMINGVENADSFSFNAHKWFLTTLDCCCLWVKDPSSLVRCLSTNPEYLKNKATDTQQVVDYKDWQITLSRRFRSLKMWLVLRSYGVDYLRNFLRSHVDMAAYFEQLVRMDGRFEVVVPRSFALVCFRLSASAVIQRLYDSCHRHGHGQKFLEEETLNDVNAELLESVNSAGQIYMTHSLVDGVYMLRFAVGATLTQTHHVTYAWKQVQDHASAVLARRINSICNC</sequence>
<protein>
    <recommendedName>
        <fullName evidence="5">L-tyrosine/L-DOPA decarboxylase 2</fullName>
        <shortName evidence="5">LwTyDC2</shortName>
        <ecNumber evidence="3">4.1.1.25</ecNumber>
        <ecNumber evidence="3">4.1.1.28</ecNumber>
    </recommendedName>
    <alternativeName>
        <fullName evidence="4">Aromatic amino acid decarboxylase 1</fullName>
        <shortName evidence="4">LwTyDC1</shortName>
    </alternativeName>
</protein>
<gene>
    <name evidence="5" type="primary">TyDC2</name>
    <name evidence="4" type="synonym">TyDC1</name>
</gene>
<comment type="function">
    <text evidence="2 3">Aromatic amino acid decarboxylase participating in the biosynthesis of natural products derived from phenylethylamine, including mescaline, a natural hallucinogen potentially used in psychotherapeutic treatments (PubMed:37675639, PubMed:38835170). Catalyzes the decarboxylation of L-tyrosine and L-DOPA (PubMed:37675639, PubMed:38835170).</text>
</comment>
<comment type="catalytic activity">
    <reaction evidence="2 3">
        <text>L-tyrosine + H(+) = tyramine + CO2</text>
        <dbReference type="Rhea" id="RHEA:14345"/>
        <dbReference type="ChEBI" id="CHEBI:15378"/>
        <dbReference type="ChEBI" id="CHEBI:16526"/>
        <dbReference type="ChEBI" id="CHEBI:58315"/>
        <dbReference type="ChEBI" id="CHEBI:327995"/>
        <dbReference type="EC" id="4.1.1.25"/>
    </reaction>
    <physiologicalReaction direction="left-to-right" evidence="2 3">
        <dbReference type="Rhea" id="RHEA:14346"/>
    </physiologicalReaction>
</comment>
<comment type="catalytic activity">
    <reaction evidence="2 3">
        <text>L-dopa + H(+) = dopamine + CO2</text>
        <dbReference type="Rhea" id="RHEA:12272"/>
        <dbReference type="ChEBI" id="CHEBI:15378"/>
        <dbReference type="ChEBI" id="CHEBI:16526"/>
        <dbReference type="ChEBI" id="CHEBI:57504"/>
        <dbReference type="ChEBI" id="CHEBI:59905"/>
        <dbReference type="EC" id="4.1.1.28"/>
    </reaction>
    <physiologicalReaction direction="left-to-right" evidence="2 3">
        <dbReference type="Rhea" id="RHEA:12273"/>
    </physiologicalReaction>
</comment>
<comment type="cofactor">
    <cofactor evidence="1">
        <name>pyridoxal 5'-phosphate</name>
        <dbReference type="ChEBI" id="CHEBI:597326"/>
    </cofactor>
</comment>
<comment type="biophysicochemical properties">
    <kinetics>
        <KM evidence="3">229 uM for L-tyrosine (at pH 7.5 and 30 degrees Celsius)</KM>
        <KM evidence="3">1575 uM for L-DOPA (at pH 7.5 and 30 degrees Celsius)</KM>
    </kinetics>
</comment>
<comment type="pathway">
    <text evidence="2 3">Aromatic compound metabolism.</text>
</comment>
<comment type="pathway">
    <text evidence="2 3">Alkaloid biosynthesis.</text>
</comment>
<comment type="tissue specificity">
    <text evidence="2 3">Strongly expressed in all tissues, particularly in thick roots.</text>
</comment>
<comment type="biotechnology">
    <text evidence="3">An heterologous biosynthetic pathway of mescaline is reconstructed in Nicotiana benthamiana plants and yeast cells expressing Lophophora williamsii genes TyDC2, CYP76AD131, OMT1 and OMT11, thus providing a sustainable production of phenylethylamine-derivated natural products.</text>
</comment>
<comment type="similarity">
    <text evidence="6">Belongs to the group II decarboxylase family.</text>
</comment>
<dbReference type="EC" id="4.1.1.25" evidence="3"/>
<dbReference type="EC" id="4.1.1.28" evidence="3"/>
<dbReference type="EMBL" id="OQ831045">
    <property type="protein sequence ID" value="WMX25288.1"/>
    <property type="molecule type" value="mRNA"/>
</dbReference>
<dbReference type="GO" id="GO:0005737">
    <property type="term" value="C:cytoplasm"/>
    <property type="evidence" value="ECO:0007669"/>
    <property type="project" value="TreeGrafter"/>
</dbReference>
<dbReference type="GO" id="GO:0016831">
    <property type="term" value="F:carboxy-lyase activity"/>
    <property type="evidence" value="ECO:0007669"/>
    <property type="project" value="UniProtKB-KW"/>
</dbReference>
<dbReference type="GO" id="GO:0030170">
    <property type="term" value="F:pyridoxal phosphate binding"/>
    <property type="evidence" value="ECO:0007669"/>
    <property type="project" value="InterPro"/>
</dbReference>
<dbReference type="GO" id="GO:0006520">
    <property type="term" value="P:amino acid metabolic process"/>
    <property type="evidence" value="ECO:0007669"/>
    <property type="project" value="InterPro"/>
</dbReference>
<dbReference type="GO" id="GO:0019752">
    <property type="term" value="P:carboxylic acid metabolic process"/>
    <property type="evidence" value="ECO:0007669"/>
    <property type="project" value="InterPro"/>
</dbReference>
<dbReference type="CDD" id="cd06450">
    <property type="entry name" value="DOPA_deC_like"/>
    <property type="match status" value="1"/>
</dbReference>
<dbReference type="FunFam" id="1.20.1340.10:FF:000001">
    <property type="entry name" value="Histidine decarboxylase"/>
    <property type="match status" value="1"/>
</dbReference>
<dbReference type="FunFam" id="3.40.640.10:FF:000025">
    <property type="entry name" value="Histidine decarboxylase"/>
    <property type="match status" value="1"/>
</dbReference>
<dbReference type="Gene3D" id="3.90.1150.10">
    <property type="entry name" value="Aspartate Aminotransferase, domain 1"/>
    <property type="match status" value="1"/>
</dbReference>
<dbReference type="Gene3D" id="1.20.1340.10">
    <property type="entry name" value="dopa decarboxylase, N-terminal domain"/>
    <property type="match status" value="1"/>
</dbReference>
<dbReference type="Gene3D" id="3.40.640.10">
    <property type="entry name" value="Type I PLP-dependent aspartate aminotransferase-like (Major domain)"/>
    <property type="match status" value="1"/>
</dbReference>
<dbReference type="InterPro" id="IPR010977">
    <property type="entry name" value="Aromatic_deC"/>
</dbReference>
<dbReference type="InterPro" id="IPR002129">
    <property type="entry name" value="PyrdxlP-dep_de-COase"/>
</dbReference>
<dbReference type="InterPro" id="IPR015424">
    <property type="entry name" value="PyrdxlP-dep_Trfase"/>
</dbReference>
<dbReference type="InterPro" id="IPR015421">
    <property type="entry name" value="PyrdxlP-dep_Trfase_major"/>
</dbReference>
<dbReference type="InterPro" id="IPR015422">
    <property type="entry name" value="PyrdxlP-dep_Trfase_small"/>
</dbReference>
<dbReference type="InterPro" id="IPR021115">
    <property type="entry name" value="Pyridoxal-P_BS"/>
</dbReference>
<dbReference type="PANTHER" id="PTHR11999">
    <property type="entry name" value="GROUP II PYRIDOXAL-5-PHOSPHATE DECARBOXYLASE"/>
    <property type="match status" value="1"/>
</dbReference>
<dbReference type="PANTHER" id="PTHR11999:SF96">
    <property type="entry name" value="TYROSINE DECARBOXYLASE"/>
    <property type="match status" value="1"/>
</dbReference>
<dbReference type="Pfam" id="PF00282">
    <property type="entry name" value="Pyridoxal_deC"/>
    <property type="match status" value="1"/>
</dbReference>
<dbReference type="PRINTS" id="PR00800">
    <property type="entry name" value="YHDCRBOXLASE"/>
</dbReference>
<dbReference type="SUPFAM" id="SSF53383">
    <property type="entry name" value="PLP-dependent transferases"/>
    <property type="match status" value="1"/>
</dbReference>
<dbReference type="PROSITE" id="PS00392">
    <property type="entry name" value="DDC_GAD_HDC_YDC"/>
    <property type="match status" value="1"/>
</dbReference>
<accession>A0AA51Z3J4</accession>
<name>TYDC2_LOPWI</name>
<feature type="chain" id="PRO_0000462569" description="L-tyrosine/L-DOPA decarboxylase 2">
    <location>
        <begin position="1"/>
        <end position="522"/>
    </location>
</feature>
<feature type="repeat" description="1" evidence="1">
    <location>
        <begin position="75"/>
        <end position="132"/>
    </location>
</feature>
<feature type="repeat" description="2" evidence="1">
    <location>
        <begin position="135"/>
        <end position="186"/>
    </location>
</feature>
<feature type="region of interest" description="2 X approximate tandem repeats" evidence="1">
    <location>
        <begin position="75"/>
        <end position="186"/>
    </location>
</feature>
<feature type="binding site" evidence="1">
    <location>
        <position position="163"/>
    </location>
    <ligand>
        <name>pyridoxal 5'-phosphate</name>
        <dbReference type="ChEBI" id="CHEBI:597326"/>
    </ligand>
</feature>
<feature type="binding site" evidence="1">
    <location>
        <position position="164"/>
    </location>
    <ligand>
        <name>pyridoxal 5'-phosphate</name>
        <dbReference type="ChEBI" id="CHEBI:597326"/>
    </ligand>
</feature>
<feature type="binding site" evidence="1">
    <location>
        <position position="258"/>
    </location>
    <ligand>
        <name>pyridoxal 5'-phosphate</name>
        <dbReference type="ChEBI" id="CHEBI:597326"/>
    </ligand>
</feature>
<feature type="binding site" evidence="1">
    <location>
        <position position="312"/>
    </location>
    <ligand>
        <name>pyridoxal 5'-phosphate</name>
        <dbReference type="ChEBI" id="CHEBI:597326"/>
    </ligand>
</feature>
<feature type="modified residue" description="N6-(pyridoxal phosphate)lysine" evidence="1">
    <location>
        <position position="315"/>
    </location>
</feature>
<feature type="sequence conflict" description="In Ref. 2; no nucleotide entry." evidence="6" ref="2">
    <original>I</original>
    <variation>V</variation>
    <location>
        <position position="31"/>
    </location>
</feature>
<feature type="sequence conflict" description="In Ref. 1; WMX25288." evidence="6" ref="1">
    <original>T</original>
    <variation>R</variation>
    <location>
        <position position="72"/>
    </location>
</feature>
<feature type="sequence conflict" description="In Ref. 1; WMX25288." evidence="6" ref="1">
    <original>S</original>
    <variation>L</variation>
    <location>
        <position position="212"/>
    </location>
</feature>
<feature type="sequence conflict" description="In Ref. 1; WMX25288." evidence="6" ref="1">
    <original>V</original>
    <variation>A</variation>
    <location>
        <position position="242"/>
    </location>
</feature>
<feature type="sequence conflict" description="In Ref. 1; WMX25288." evidence="6" ref="1">
    <original>A</original>
    <variation>T</variation>
    <location>
        <position position="273"/>
    </location>
</feature>
<keyword id="KW-0017">Alkaloid metabolism</keyword>
<keyword id="KW-0210">Decarboxylase</keyword>
<keyword id="KW-0456">Lyase</keyword>
<keyword id="KW-0663">Pyridoxal phosphate</keyword>
<keyword id="KW-0677">Repeat</keyword>
<evidence type="ECO:0000250" key="1">
    <source>
        <dbReference type="UniProtKB" id="P20711"/>
    </source>
</evidence>
<evidence type="ECO:0000269" key="2">
    <source>
    </source>
</evidence>
<evidence type="ECO:0000269" key="3">
    <source>
    </source>
</evidence>
<evidence type="ECO:0000303" key="4">
    <source>
    </source>
</evidence>
<evidence type="ECO:0000303" key="5">
    <source>
    </source>
</evidence>
<evidence type="ECO:0000305" key="6"/>
<evidence type="ECO:0000312" key="7">
    <source>
        <dbReference type="EMBL" id="WMX25288.1"/>
    </source>
</evidence>
<proteinExistence type="evidence at protein level"/>